<organismHost>
    <name type="scientific">Acanthamoeba polyphaga</name>
    <name type="common">Amoeba</name>
    <dbReference type="NCBI Taxonomy" id="5757"/>
</organismHost>
<accession>Q5UPU6</accession>
<sequence>MYQNFIGQNPMLNQFNTYSQQNPNFIPFHNNQLINNNVHVANNLNNFVQQHKQLQNQMPQFQNQFQNQSMNQSMNQSMNQQINRPMNQSMNQSMNQPMNKIGNKINKSHSENKSAKNIIEEMLKPQKIVKDNKDVESSYKNRNKQHENILKKGDFSEFKLTNAPYKVIIKDKINDYVGKNIDHFKKPEQLIVHKADPKIDANTDRFNAELELKESDLEKINETLKLEFKPERYNEHKKIFEHKEVYIRNMAYEAKTFDDNKQDYIEFYRQKQKEAEEGKKLYDDIIRNIIDEGIISKDELPTENLQNEKDVDIDKIIIDMNLDYQ</sequence>
<organism>
    <name type="scientific">Acanthamoeba polyphaga mimivirus</name>
    <name type="common">APMV</name>
    <dbReference type="NCBI Taxonomy" id="212035"/>
    <lineage>
        <taxon>Viruses</taxon>
        <taxon>Varidnaviria</taxon>
        <taxon>Bamfordvirae</taxon>
        <taxon>Nucleocytoviricota</taxon>
        <taxon>Megaviricetes</taxon>
        <taxon>Imitervirales</taxon>
        <taxon>Mimiviridae</taxon>
        <taxon>Megamimivirinae</taxon>
        <taxon>Mimivirus</taxon>
        <taxon>Mimivirus bradfordmassiliense</taxon>
    </lineage>
</organism>
<name>YL265_MIMIV</name>
<keyword id="KW-0175">Coiled coil</keyword>
<keyword id="KW-1185">Reference proteome</keyword>
<feature type="chain" id="PRO_0000247367" description="Uncharacterized protein L265">
    <location>
        <begin position="1"/>
        <end position="325"/>
    </location>
</feature>
<feature type="coiled-coil region" evidence="1">
    <location>
        <begin position="38"/>
        <end position="69"/>
    </location>
</feature>
<feature type="coiled-coil region" evidence="1">
    <location>
        <begin position="201"/>
        <end position="229"/>
    </location>
</feature>
<protein>
    <recommendedName>
        <fullName>Uncharacterized protein L265</fullName>
    </recommendedName>
</protein>
<proteinExistence type="predicted"/>
<dbReference type="EMBL" id="AY653733">
    <property type="protein sequence ID" value="AAV50537.1"/>
    <property type="molecule type" value="Genomic_DNA"/>
</dbReference>
<dbReference type="KEGG" id="vg:9924874"/>
<dbReference type="OrthoDB" id="26700at10239"/>
<dbReference type="Proteomes" id="UP000001134">
    <property type="component" value="Genome"/>
</dbReference>
<gene>
    <name type="ordered locus">MIMI_L265</name>
</gene>
<reference key="1">
    <citation type="journal article" date="2004" name="Science">
        <title>The 1.2-megabase genome sequence of Mimivirus.</title>
        <authorList>
            <person name="Raoult D."/>
            <person name="Audic S."/>
            <person name="Robert C."/>
            <person name="Abergel C."/>
            <person name="Renesto P."/>
            <person name="Ogata H."/>
            <person name="La Scola B."/>
            <person name="Susan M."/>
            <person name="Claverie J.-M."/>
        </authorList>
    </citation>
    <scope>NUCLEOTIDE SEQUENCE [LARGE SCALE GENOMIC DNA]</scope>
    <source>
        <strain>Rowbotham-Bradford</strain>
    </source>
</reference>
<evidence type="ECO:0000255" key="1"/>